<proteinExistence type="inferred from homology"/>
<evidence type="ECO:0000250" key="1"/>
<evidence type="ECO:0000305" key="2"/>
<accession>O71192</accession>
<name>MVP1_GLRV3</name>
<dbReference type="EMBL" id="AF037268">
    <property type="protein sequence ID" value="AAC40708.1"/>
    <property type="molecule type" value="Genomic_RNA"/>
</dbReference>
<dbReference type="RefSeq" id="NP_813799.1">
    <property type="nucleotide sequence ID" value="NC_004667.1"/>
</dbReference>
<dbReference type="SMR" id="O71192"/>
<dbReference type="KEGG" id="vg:1444470"/>
<dbReference type="Proteomes" id="UP000006707">
    <property type="component" value="Segment"/>
</dbReference>
<dbReference type="GO" id="GO:0044423">
    <property type="term" value="C:virion component"/>
    <property type="evidence" value="ECO:0007669"/>
    <property type="project" value="UniProtKB-KW"/>
</dbReference>
<dbReference type="GO" id="GO:0005524">
    <property type="term" value="F:ATP binding"/>
    <property type="evidence" value="ECO:0007669"/>
    <property type="project" value="UniProtKB-KW"/>
</dbReference>
<dbReference type="GO" id="GO:0140662">
    <property type="term" value="F:ATP-dependent protein folding chaperone"/>
    <property type="evidence" value="ECO:0007669"/>
    <property type="project" value="InterPro"/>
</dbReference>
<dbReference type="Gene3D" id="3.30.420.40">
    <property type="match status" value="2"/>
</dbReference>
<dbReference type="Gene3D" id="3.90.640.10">
    <property type="entry name" value="Actin, Chain A, domain 4"/>
    <property type="match status" value="1"/>
</dbReference>
<dbReference type="InterPro" id="IPR043129">
    <property type="entry name" value="ATPase_NBD"/>
</dbReference>
<dbReference type="InterPro" id="IPR029047">
    <property type="entry name" value="HSP70_peptide-bd_sf"/>
</dbReference>
<dbReference type="InterPro" id="IPR013126">
    <property type="entry name" value="Hsp_70_fam"/>
</dbReference>
<dbReference type="PANTHER" id="PTHR19375">
    <property type="entry name" value="HEAT SHOCK PROTEIN 70KDA"/>
    <property type="match status" value="1"/>
</dbReference>
<dbReference type="Pfam" id="PF00012">
    <property type="entry name" value="HSP70"/>
    <property type="match status" value="1"/>
</dbReference>
<dbReference type="PRINTS" id="PR00301">
    <property type="entry name" value="HEATSHOCK70"/>
</dbReference>
<dbReference type="SUPFAM" id="SSF53067">
    <property type="entry name" value="Actin-like ATPase domain"/>
    <property type="match status" value="2"/>
</dbReference>
<dbReference type="SUPFAM" id="SSF100920">
    <property type="entry name" value="Heat shock protein 70kD (HSP70), peptide-binding domain"/>
    <property type="match status" value="1"/>
</dbReference>
<feature type="chain" id="PRO_0000402534" description="Movement protein Hsp70h">
    <location>
        <begin position="1"/>
        <end position="549"/>
    </location>
</feature>
<organismHost>
    <name type="scientific">Vitis vinifera</name>
    <name type="common">Grape</name>
    <dbReference type="NCBI Taxonomy" id="29760"/>
</organismHost>
<organism>
    <name type="scientific">Grapevine leafroll-associated virus 3 (isolate United States/NY1)</name>
    <name type="common">GLRaV-3</name>
    <name type="synonym">Grapevine leafroll-associated closterovirus (isolate 109)</name>
    <dbReference type="NCBI Taxonomy" id="651354"/>
    <lineage>
        <taxon>Viruses</taxon>
        <taxon>Riboviria</taxon>
        <taxon>Orthornavirae</taxon>
        <taxon>Kitrinoviricota</taxon>
        <taxon>Alsuviricetes</taxon>
        <taxon>Martellivirales</taxon>
        <taxon>Closteroviridae</taxon>
        <taxon>Ampelovirus</taxon>
        <taxon>Grapevine leafroll-associated virus 3</taxon>
    </lineage>
</organism>
<comment type="function">
    <text evidence="1">Transports viral genome to neighboring plant cells directly through plasmosdesmata, without any budding. The movement protein allows efficient cell to cell propagation, by bypassing the host cell wall barrier. Two movement proteins, p6, Hsp70h and three structural proteins, CP, CPm, and P64 are essential for cell-cell movement. Also plays a role in virion formation. Together with CPm and p64, encapsidates the 5'-terminal portion of the viral genome (By similarity).</text>
</comment>
<comment type="subcellular location">
    <subcellularLocation>
        <location evidence="1">Virion</location>
    </subcellularLocation>
</comment>
<comment type="similarity">
    <text evidence="2">Belongs to the heat shock protein 70 family.</text>
</comment>
<sequence>MEVGIDFGTTFSTICFSPSGVSGCTPVAGSVYVETQIFIPEGSSTYLIGKAAGKAYRDGVEGRLYVNPKRWAGVTRDNVERYVEKLKPTYTVKIDSGGALLIGGLGSGPDTLLRVVDVICLFLRALILECERYTSTTVTAAVVTVPADYNSFKRSFVVEALKGLGIPVRGVVNEPTAAALYSLAKSRVEDLLLAVFDFGGGTFDVSFVKKKGNILCVIFSVGDNFLGGRDIDRAIVEVIKQKIKGKASDAKLGIFVSSMKEDLSNNNAITQHLIPVEGGVEVVDLTSDELDAIVAPFSARAVEVFKTGLDNFYPDPVIAVMTGGSSALVKVRSDVANLPQISKVVFDSTDFRCSVACGAKVYCDTLAGNSGLRLVDTLTNTLTDEVVGLQPVVIFPKGSPIPCSYTHRYTVGGGDVVYGIFEGENNRAFLNEPTFRGVSKRRGDPVETDVAQFNLSTDGTVSVIVNGEEVKNEYLVPGTTNVLDSLVYKSGREDLEAKAIPEYLTTLNILHDKAFTRRNLGNKDKGFSDLRIEENFLKSAVDTDTILNG</sequence>
<gene>
    <name type="ORF">ORF4</name>
</gene>
<reference key="1">
    <citation type="journal article" date="1998" name="J. Gen. Virol.">
        <title>Nucleotide sequence of the 3'-terminal two-thirds of the grapevine leafroll-associated virus-3 genome reveals a typical monopartite closterovirus.</title>
        <authorList>
            <person name="Ling K.S."/>
            <person name="Zhu H.Y."/>
            <person name="Drong R.F."/>
            <person name="Slightom J.L."/>
            <person name="McFerson J.R."/>
            <person name="Gonsalves D."/>
        </authorList>
    </citation>
    <scope>NUCLEOTIDE SEQUENCE [GENOMIC RNA]</scope>
</reference>
<keyword id="KW-0067">ATP-binding</keyword>
<keyword id="KW-0143">Chaperone</keyword>
<keyword id="KW-0547">Nucleotide-binding</keyword>
<keyword id="KW-1185">Reference proteome</keyword>
<keyword id="KW-0946">Virion</keyword>
<protein>
    <recommendedName>
        <fullName>Movement protein Hsp70h</fullName>
    </recommendedName>
    <alternativeName>
        <fullName>Heat shock protein 70 homolog</fullName>
        <shortName>Hsp70h</shortName>
    </alternativeName>
</protein>